<reference key="1">
    <citation type="journal article" date="2015" name="Chem. Sci.">
        <title>Genome mining and molecular characterization of the biosynthetic gene cluster of a diterpenic meroterpenoid, 15-deoxyoxalicine B, in Penicillium canescens.</title>
        <authorList>
            <person name="Yaegashi J."/>
            <person name="Romsdahl J."/>
            <person name="Chiang Y.M."/>
            <person name="Wang C.C.C."/>
        </authorList>
    </citation>
    <scope>FUNCTION</scope>
    <scope>DISRUPTION PHENOTYPE</scope>
    <scope>SUBCELLULAR LOCATION</scope>
    <scope>PATHWAY</scope>
</reference>
<reference key="2">
    <citation type="journal article" date="2016" name="Chem. Sci.">
        <title>Correction: Genome mining and molecular characterization of the biosynthetic gene cluster of a diterpenic meroterpenoid, 15-deoxyoxalicine B, in Penicillium canescens.</title>
        <authorList>
            <person name="Yaegashi J."/>
            <person name="Romsdahl J."/>
            <person name="Chiang Y.M."/>
            <person name="Wang C.C.C."/>
        </authorList>
    </citation>
    <scope>ERRATUM OF PUBMED:30090271</scope>
</reference>
<feature type="chain" id="PRO_0000453895" description="Dioxygenase olcK">
    <location>
        <begin position="1"/>
        <end position="302"/>
    </location>
</feature>
<feature type="binding site" evidence="2">
    <location>
        <position position="136"/>
    </location>
    <ligand>
        <name>Fe cation</name>
        <dbReference type="ChEBI" id="CHEBI:24875"/>
    </ligand>
</feature>
<feature type="binding site" evidence="2">
    <location>
        <position position="138"/>
    </location>
    <ligand>
        <name>Fe cation</name>
        <dbReference type="ChEBI" id="CHEBI:24875"/>
    </ligand>
</feature>
<feature type="binding site" evidence="2">
    <location>
        <position position="213"/>
    </location>
    <ligand>
        <name>Fe cation</name>
        <dbReference type="ChEBI" id="CHEBI:24875"/>
    </ligand>
</feature>
<dbReference type="EC" id="1.14.11.-" evidence="4"/>
<dbReference type="SMR" id="P9WEP3"/>
<dbReference type="UniPathway" id="UPA00213"/>
<dbReference type="GO" id="GO:0005782">
    <property type="term" value="C:peroxisomal matrix"/>
    <property type="evidence" value="ECO:0007669"/>
    <property type="project" value="UniProtKB-SubCell"/>
</dbReference>
<dbReference type="GO" id="GO:0051213">
    <property type="term" value="F:dioxygenase activity"/>
    <property type="evidence" value="ECO:0007669"/>
    <property type="project" value="UniProtKB-KW"/>
</dbReference>
<dbReference type="GO" id="GO:0046872">
    <property type="term" value="F:metal ion binding"/>
    <property type="evidence" value="ECO:0007669"/>
    <property type="project" value="UniProtKB-KW"/>
</dbReference>
<dbReference type="GO" id="GO:0016114">
    <property type="term" value="P:terpenoid biosynthetic process"/>
    <property type="evidence" value="ECO:0007669"/>
    <property type="project" value="UniProtKB-UniPathway"/>
</dbReference>
<dbReference type="Gene3D" id="2.60.120.620">
    <property type="entry name" value="q2cbj1_9rhob like domain"/>
    <property type="match status" value="1"/>
</dbReference>
<dbReference type="InterPro" id="IPR008775">
    <property type="entry name" value="Phytyl_CoA_dOase-like"/>
</dbReference>
<dbReference type="PANTHER" id="PTHR20883:SF41">
    <property type="entry name" value="IRON_ALPHA-KETOGLUTARATE-DEPENDENT DIOXYGENASE ASQJ"/>
    <property type="match status" value="1"/>
</dbReference>
<dbReference type="PANTHER" id="PTHR20883">
    <property type="entry name" value="PHYTANOYL-COA DIOXYGENASE DOMAIN CONTAINING 1"/>
    <property type="match status" value="1"/>
</dbReference>
<dbReference type="Pfam" id="PF05721">
    <property type="entry name" value="PhyH"/>
    <property type="match status" value="1"/>
</dbReference>
<dbReference type="SUPFAM" id="SSF51197">
    <property type="entry name" value="Clavaminate synthase-like"/>
    <property type="match status" value="1"/>
</dbReference>
<sequence>MTIVSPDKLPSARAVELTAPLDDIYQILNEDGAVIIKNFIPLELVDKINKEVDPYLAQHAAGPNHMSEIYKLTVGSKTKHMGNLTMASKSFRDEVLNHPSMHAISEKLFRANFGDYWLNRAAVLEVDSGEKAQGLHRDDSLYPWKAFLTKDSPELMVNFFIALTEFREENGATRLVLGSHKWEDSTRYPSPEQTIPAEMQAGDAIVYLASLFHGAGQNRSQKTRRGLSITTHPAHFTPMESHIDVPRAIIENMTPLAQKMIGWRTWSTNHGVPVWTVRDGRMEDELKLKSLESPKQIQAAVI</sequence>
<organism>
    <name type="scientific">Penicillium canescens</name>
    <dbReference type="NCBI Taxonomy" id="5083"/>
    <lineage>
        <taxon>Eukaryota</taxon>
        <taxon>Fungi</taxon>
        <taxon>Dikarya</taxon>
        <taxon>Ascomycota</taxon>
        <taxon>Pezizomycotina</taxon>
        <taxon>Eurotiomycetes</taxon>
        <taxon>Eurotiomycetidae</taxon>
        <taxon>Eurotiales</taxon>
        <taxon>Aspergillaceae</taxon>
        <taxon>Penicillium</taxon>
    </lineage>
</organism>
<protein>
    <recommendedName>
        <fullName evidence="5">Dioxygenase olcK</fullName>
        <ecNumber evidence="4">1.14.11.-</ecNumber>
    </recommendedName>
    <alternativeName>
        <fullName evidence="5">15-deoxyoxalicine B biosynthesis cluster protein K</fullName>
    </alternativeName>
</protein>
<proteinExistence type="inferred from homology"/>
<gene>
    <name evidence="5" type="primary">olcK</name>
</gene>
<evidence type="ECO:0000250" key="1">
    <source>
        <dbReference type="UniProtKB" id="A0A097ZPD9"/>
    </source>
</evidence>
<evidence type="ECO:0000250" key="2">
    <source>
        <dbReference type="UniProtKB" id="O14832"/>
    </source>
</evidence>
<evidence type="ECO:0000250" key="3">
    <source>
        <dbReference type="UniProtKB" id="Q4WAW9"/>
    </source>
</evidence>
<evidence type="ECO:0000269" key="4">
    <source>
    </source>
</evidence>
<evidence type="ECO:0000303" key="5">
    <source>
    </source>
</evidence>
<evidence type="ECO:0000305" key="6"/>
<evidence type="ECO:0000305" key="7">
    <source>
    </source>
</evidence>
<keyword id="KW-0223">Dioxygenase</keyword>
<keyword id="KW-0408">Iron</keyword>
<keyword id="KW-0479">Metal-binding</keyword>
<keyword id="KW-0560">Oxidoreductase</keyword>
<keyword id="KW-0576">Peroxisome</keyword>
<name>OLCK_PENCN</name>
<comment type="function">
    <text evidence="4 7">Dioxygenase; part of the gene cluster that mediates the biosynthesis of 15-deoxyoxalicine B (PubMed:30090271). The first step of the pathway is the synthesis of nicotinyl-CoA from nicotinic acid by the nicotinic acid-CoA ligase olcI (PubMed:30090271). Nicotinyl-CoA is then a substrate of polyketide synthase olcA to produce 4-hydroxy-6-(3-pyridinyl)-2H-pyran-2-one (HPPO) which is further prenylated by the polyprenyl transferase olcH to yield geranylgeranyl-HPPO (PubMed:30090271). Geranylgeranyl pyrophosphate is provided by the cluster-specific geranylgeranyl pyrophosphate synthase olcC (PubMed:30090271). The FAD-dependent monooxygenase olcE catalyzes the epoxidation of geranylgeranyl-HPPO and the terpene cyclase olcD catalyzes the cyclization of the terpenoid component, resulting in the formation of the tricyclic terpene moiety seen in predecaturin E (PubMed:30090271). The cytochrome P450 monooxygenase then catalyzes the allylic oxidation of predecaturin E, which is followed by spirocylization with concomitant loss of one molecule of water to form decaturin E (PubMed:30090271). Decaturin E is the substrate of the cytochrome P450 monooxygenase olcJ which hydroxylates it at the C-29 position to form decaturin F (PubMed:30090271). The short-chain dehydrogenase/reductase olcF may catalyze the oxidation of decaturin F to generate the 29-hydroxyl-27-one intermediate, and subsequent hemiacetal formation probably leads to the formation of decaturin C (Probable). The dioxygenase olcK may be a peroxisomal enzyme that catalyzes the hydroxylation of decaturin C into decaturin A once decaturin C is shuttled into the peroxisome by the MFS transporter olcL (Probable). Finally the cytochrome P450 monooxygenase olcB catalyzes the oxidative rearrangement to yield 15-deoxyoxalicine B (PubMed:30090271). In the absence of olcJ, decaturin E may be shunted to a pathway in which it is oxidized to a ketone, possibly by olcF, to form decaturin D, which undergoes further allylic oxidation to yield decaturin G (PubMed:30090271). Moreover, in the absence of oclK or oclL, oclB can convert decaturin C into 15-deoxyoxalicine A (PubMed:30090271).</text>
</comment>
<comment type="cofactor">
    <cofactor evidence="1">
        <name>Fe cation</name>
        <dbReference type="ChEBI" id="CHEBI:24875"/>
    </cofactor>
</comment>
<comment type="pathway">
    <text evidence="4">Secondary metabolite biosynthesis; terpenoid biosynthesis.</text>
</comment>
<comment type="subunit">
    <text evidence="3">Homodimer.</text>
</comment>
<comment type="subcellular location">
    <subcellularLocation>
        <location evidence="7">Peroxisome matrix</location>
    </subcellularLocation>
</comment>
<comment type="disruption phenotype">
    <text evidence="4">Abolishes the production of 15-deoxyoxalicine B and accumulates decaturin C and 5-deoxyoxalicine A.</text>
</comment>
<comment type="miscellaneous">
    <text evidence="4">The 15-deoxyoxalicine B cluster is a rare cluster that contains its own geranylgeranyl pyrophosphate synthase (olcC), in contrast to other related clusters which rely on a FPP/GGPP synthase localized outside of the cluster.</text>
</comment>
<comment type="similarity">
    <text evidence="6">Belongs to the PhyH family.</text>
</comment>
<accession>P9WEP3</accession>